<name>CODY_STRPG</name>
<feature type="chain" id="PRO_1000051550" description="Global transcriptional regulator CodY">
    <location>
        <begin position="1"/>
        <end position="260"/>
    </location>
</feature>
<feature type="DNA-binding region" description="H-T-H motif" evidence="1">
    <location>
        <begin position="207"/>
        <end position="226"/>
    </location>
</feature>
<feature type="region of interest" description="GAF domain" evidence="1">
    <location>
        <begin position="1"/>
        <end position="159"/>
    </location>
</feature>
<gene>
    <name evidence="1" type="primary">codY</name>
    <name type="ordered locus">SpyM50333</name>
</gene>
<proteinExistence type="inferred from homology"/>
<keyword id="KW-0963">Cytoplasm</keyword>
<keyword id="KW-0238">DNA-binding</keyword>
<keyword id="KW-0678">Repressor</keyword>
<keyword id="KW-0804">Transcription</keyword>
<keyword id="KW-0805">Transcription regulation</keyword>
<reference key="1">
    <citation type="journal article" date="2007" name="J. Bacteriol.">
        <title>Complete genome of acute rheumatic fever-associated serotype M5 Streptococcus pyogenes strain Manfredo.</title>
        <authorList>
            <person name="Holden M.T.G."/>
            <person name="Scott A."/>
            <person name="Cherevach I."/>
            <person name="Chillingworth T."/>
            <person name="Churcher C."/>
            <person name="Cronin A."/>
            <person name="Dowd L."/>
            <person name="Feltwell T."/>
            <person name="Hamlin N."/>
            <person name="Holroyd S."/>
            <person name="Jagels K."/>
            <person name="Moule S."/>
            <person name="Mungall K."/>
            <person name="Quail M.A."/>
            <person name="Price C."/>
            <person name="Rabbinowitsch E."/>
            <person name="Sharp S."/>
            <person name="Skelton J."/>
            <person name="Whitehead S."/>
            <person name="Barrell B.G."/>
            <person name="Kehoe M."/>
            <person name="Parkhill J."/>
        </authorList>
    </citation>
    <scope>NUCLEOTIDE SEQUENCE [LARGE SCALE GENOMIC DNA]</scope>
    <source>
        <strain>Manfredo</strain>
    </source>
</reference>
<organism>
    <name type="scientific">Streptococcus pyogenes serotype M5 (strain Manfredo)</name>
    <dbReference type="NCBI Taxonomy" id="160491"/>
    <lineage>
        <taxon>Bacteria</taxon>
        <taxon>Bacillati</taxon>
        <taxon>Bacillota</taxon>
        <taxon>Bacilli</taxon>
        <taxon>Lactobacillales</taxon>
        <taxon>Streptococcaceae</taxon>
        <taxon>Streptococcus</taxon>
    </lineage>
</organism>
<accession>A2RCV3</accession>
<comment type="function">
    <text evidence="1">DNA-binding global transcriptional regulator which is involved in the adaptive response to starvation and acts by directly or indirectly controlling the expression of numerous genes in response to nutrient availability. During rapid exponential growth, CodY is highly active and represses genes whose products allow adaptation to nutrient depletion.</text>
</comment>
<comment type="subcellular location">
    <subcellularLocation>
        <location evidence="1">Cytoplasm</location>
    </subcellularLocation>
</comment>
<comment type="similarity">
    <text evidence="1">Belongs to the CodY family.</text>
</comment>
<protein>
    <recommendedName>
        <fullName evidence="1">Global transcriptional regulator CodY</fullName>
    </recommendedName>
</protein>
<evidence type="ECO:0000255" key="1">
    <source>
        <dbReference type="HAMAP-Rule" id="MF_00621"/>
    </source>
</evidence>
<sequence length="260" mass="28634">MPNLLEKTRKITSILQRSVDSLETELPYNTMASRLADIIDCNACIINGGGTLLGYAMKYKTNTDRVEEFFEAKQFPDTYVKAASRVYDTEANLSVENELTIFPVESKDTYPGGLTTIAPIYGGGMRLGSLIIWRNDNEFSDDDLILVEISSTVVGIQLLNLQTENLEDTIRKQTAVNMAINTLSYSEMKAVAAILGELDGNEGRLTASVIADRIGITRSVIVNALRKLESAGIIESRSLGMKGTYLKVINEGIFAKLKEF</sequence>
<dbReference type="EMBL" id="AM295007">
    <property type="protein sequence ID" value="CAM29676.1"/>
    <property type="molecule type" value="Genomic_DNA"/>
</dbReference>
<dbReference type="RefSeq" id="WP_002983278.1">
    <property type="nucleotide sequence ID" value="NC_009332.1"/>
</dbReference>
<dbReference type="SMR" id="A2RCV3"/>
<dbReference type="KEGG" id="spf:SpyM50333"/>
<dbReference type="HOGENOM" id="CLU_089581_0_0_9"/>
<dbReference type="GO" id="GO:0005737">
    <property type="term" value="C:cytoplasm"/>
    <property type="evidence" value="ECO:0007669"/>
    <property type="project" value="UniProtKB-SubCell"/>
</dbReference>
<dbReference type="GO" id="GO:0003677">
    <property type="term" value="F:DNA binding"/>
    <property type="evidence" value="ECO:0007669"/>
    <property type="project" value="UniProtKB-UniRule"/>
</dbReference>
<dbReference type="GO" id="GO:0003700">
    <property type="term" value="F:DNA-binding transcription factor activity"/>
    <property type="evidence" value="ECO:0007669"/>
    <property type="project" value="InterPro"/>
</dbReference>
<dbReference type="GO" id="GO:0005525">
    <property type="term" value="F:GTP binding"/>
    <property type="evidence" value="ECO:0007669"/>
    <property type="project" value="InterPro"/>
</dbReference>
<dbReference type="GO" id="GO:0045892">
    <property type="term" value="P:negative regulation of DNA-templated transcription"/>
    <property type="evidence" value="ECO:0007669"/>
    <property type="project" value="UniProtKB-UniRule"/>
</dbReference>
<dbReference type="CDD" id="cd00090">
    <property type="entry name" value="HTH_ARSR"/>
    <property type="match status" value="1"/>
</dbReference>
<dbReference type="FunFam" id="1.10.10.10:FF:000034">
    <property type="entry name" value="GTP-sensing transcriptional pleiotropic repressor CodY"/>
    <property type="match status" value="1"/>
</dbReference>
<dbReference type="FunFam" id="3.30.450.40:FF:000003">
    <property type="entry name" value="GTP-sensing transcriptional pleiotropic repressor CodY"/>
    <property type="match status" value="1"/>
</dbReference>
<dbReference type="Gene3D" id="3.30.450.40">
    <property type="match status" value="1"/>
</dbReference>
<dbReference type="Gene3D" id="1.10.10.10">
    <property type="entry name" value="Winged helix-like DNA-binding domain superfamily/Winged helix DNA-binding domain"/>
    <property type="match status" value="1"/>
</dbReference>
<dbReference type="HAMAP" id="MF_00621">
    <property type="entry name" value="HTH_type_CodY"/>
    <property type="match status" value="1"/>
</dbReference>
<dbReference type="InterPro" id="IPR011991">
    <property type="entry name" value="ArsR-like_HTH"/>
</dbReference>
<dbReference type="InterPro" id="IPR014154">
    <property type="entry name" value="CodY"/>
</dbReference>
<dbReference type="InterPro" id="IPR029016">
    <property type="entry name" value="GAF-like_dom_sf"/>
</dbReference>
<dbReference type="InterPro" id="IPR013198">
    <property type="entry name" value="GTP_trans_reg_CodY_C"/>
</dbReference>
<dbReference type="InterPro" id="IPR010312">
    <property type="entry name" value="Transc_reg_CodY_N"/>
</dbReference>
<dbReference type="InterPro" id="IPR036388">
    <property type="entry name" value="WH-like_DNA-bd_sf"/>
</dbReference>
<dbReference type="InterPro" id="IPR036390">
    <property type="entry name" value="WH_DNA-bd_sf"/>
</dbReference>
<dbReference type="NCBIfam" id="TIGR02787">
    <property type="entry name" value="codY_Gpos"/>
    <property type="match status" value="1"/>
</dbReference>
<dbReference type="NCBIfam" id="NF003170">
    <property type="entry name" value="PRK04158.1"/>
    <property type="match status" value="1"/>
</dbReference>
<dbReference type="PANTHER" id="PTHR40062:SF1">
    <property type="entry name" value="GLOBAL TRANSCRIPTIONAL REGULATOR CODY"/>
    <property type="match status" value="1"/>
</dbReference>
<dbReference type="PANTHER" id="PTHR40062">
    <property type="entry name" value="GTP-SENSING TRANSCRIPTIONAL PLEIOTROPIC REPRESSOR CODY"/>
    <property type="match status" value="1"/>
</dbReference>
<dbReference type="Pfam" id="PF06018">
    <property type="entry name" value="CodY"/>
    <property type="match status" value="1"/>
</dbReference>
<dbReference type="Pfam" id="PF08222">
    <property type="entry name" value="HTH_CodY"/>
    <property type="match status" value="1"/>
</dbReference>
<dbReference type="PIRSF" id="PIRSF011572">
    <property type="entry name" value="GTP_sensing_CodY"/>
    <property type="match status" value="1"/>
</dbReference>
<dbReference type="SUPFAM" id="SSF46785">
    <property type="entry name" value="Winged helix' DNA-binding domain"/>
    <property type="match status" value="1"/>
</dbReference>